<geneLocation type="chloroplast"/>
<reference key="1">
    <citation type="journal article" date="2006" name="BMC Plant Biol.">
        <title>Rapid and accurate pyrosequencing of angiosperm plastid genomes.</title>
        <authorList>
            <person name="Moore M.J."/>
            <person name="Dhingra A."/>
            <person name="Soltis P.S."/>
            <person name="Shaw R."/>
            <person name="Farmerie W.G."/>
            <person name="Folta K.M."/>
            <person name="Soltis D.E."/>
        </authorList>
    </citation>
    <scope>NUCLEOTIDE SEQUENCE [LARGE SCALE GENOMIC DNA]</scope>
</reference>
<name>PSAA_NANDO</name>
<gene>
    <name evidence="1" type="primary">psaA</name>
</gene>
<dbReference type="EC" id="1.97.1.12" evidence="1"/>
<dbReference type="EMBL" id="DQ923117">
    <property type="protein sequence ID" value="ABI49863.1"/>
    <property type="molecule type" value="Genomic_DNA"/>
</dbReference>
<dbReference type="RefSeq" id="YP_740650.1">
    <property type="nucleotide sequence ID" value="NC_008336.1"/>
</dbReference>
<dbReference type="SMR" id="Q09FW1"/>
<dbReference type="GeneID" id="4271591"/>
<dbReference type="GO" id="GO:0009535">
    <property type="term" value="C:chloroplast thylakoid membrane"/>
    <property type="evidence" value="ECO:0007669"/>
    <property type="project" value="UniProtKB-SubCell"/>
</dbReference>
<dbReference type="GO" id="GO:0009522">
    <property type="term" value="C:photosystem I"/>
    <property type="evidence" value="ECO:0007669"/>
    <property type="project" value="UniProtKB-KW"/>
</dbReference>
<dbReference type="GO" id="GO:0051539">
    <property type="term" value="F:4 iron, 4 sulfur cluster binding"/>
    <property type="evidence" value="ECO:0007669"/>
    <property type="project" value="UniProtKB-KW"/>
</dbReference>
<dbReference type="GO" id="GO:0016168">
    <property type="term" value="F:chlorophyll binding"/>
    <property type="evidence" value="ECO:0007669"/>
    <property type="project" value="UniProtKB-KW"/>
</dbReference>
<dbReference type="GO" id="GO:0009055">
    <property type="term" value="F:electron transfer activity"/>
    <property type="evidence" value="ECO:0007669"/>
    <property type="project" value="UniProtKB-UniRule"/>
</dbReference>
<dbReference type="GO" id="GO:0000287">
    <property type="term" value="F:magnesium ion binding"/>
    <property type="evidence" value="ECO:0007669"/>
    <property type="project" value="UniProtKB-UniRule"/>
</dbReference>
<dbReference type="GO" id="GO:0016491">
    <property type="term" value="F:oxidoreductase activity"/>
    <property type="evidence" value="ECO:0007669"/>
    <property type="project" value="UniProtKB-KW"/>
</dbReference>
<dbReference type="GO" id="GO:0015979">
    <property type="term" value="P:photosynthesis"/>
    <property type="evidence" value="ECO:0007669"/>
    <property type="project" value="UniProtKB-UniRule"/>
</dbReference>
<dbReference type="FunFam" id="1.20.1130.10:FF:000001">
    <property type="entry name" value="Photosystem I P700 chlorophyll a apoprotein A2"/>
    <property type="match status" value="1"/>
</dbReference>
<dbReference type="Gene3D" id="1.20.1130.10">
    <property type="entry name" value="Photosystem I PsaA/PsaB"/>
    <property type="match status" value="1"/>
</dbReference>
<dbReference type="HAMAP" id="MF_00458">
    <property type="entry name" value="PSI_PsaA"/>
    <property type="match status" value="1"/>
</dbReference>
<dbReference type="InterPro" id="IPR006243">
    <property type="entry name" value="PSI_PsaA"/>
</dbReference>
<dbReference type="InterPro" id="IPR001280">
    <property type="entry name" value="PSI_PsaA/B"/>
</dbReference>
<dbReference type="InterPro" id="IPR020586">
    <property type="entry name" value="PSI_PsaA/B_CS"/>
</dbReference>
<dbReference type="InterPro" id="IPR036408">
    <property type="entry name" value="PSI_PsaA/B_sf"/>
</dbReference>
<dbReference type="NCBIfam" id="TIGR01335">
    <property type="entry name" value="psaA"/>
    <property type="match status" value="1"/>
</dbReference>
<dbReference type="PANTHER" id="PTHR30128">
    <property type="entry name" value="OUTER MEMBRANE PROTEIN, OMPA-RELATED"/>
    <property type="match status" value="1"/>
</dbReference>
<dbReference type="PANTHER" id="PTHR30128:SF19">
    <property type="entry name" value="PHOTOSYSTEM I P700 CHLOROPHYLL A APOPROTEIN A1-RELATED"/>
    <property type="match status" value="1"/>
</dbReference>
<dbReference type="Pfam" id="PF00223">
    <property type="entry name" value="PsaA_PsaB"/>
    <property type="match status" value="1"/>
</dbReference>
<dbReference type="PIRSF" id="PIRSF002905">
    <property type="entry name" value="PSI_A"/>
    <property type="match status" value="1"/>
</dbReference>
<dbReference type="PRINTS" id="PR00257">
    <property type="entry name" value="PHOTSYSPSAAB"/>
</dbReference>
<dbReference type="SUPFAM" id="SSF81558">
    <property type="entry name" value="Photosystem I subunits PsaA/PsaB"/>
    <property type="match status" value="1"/>
</dbReference>
<dbReference type="PROSITE" id="PS00419">
    <property type="entry name" value="PHOTOSYSTEM_I_PSAAB"/>
    <property type="match status" value="1"/>
</dbReference>
<feature type="chain" id="PRO_0000294225" description="Photosystem I P700 chlorophyll a apoprotein A1">
    <location>
        <begin position="1"/>
        <end position="750"/>
    </location>
</feature>
<feature type="transmembrane region" description="Helical; Name=I" evidence="1">
    <location>
        <begin position="70"/>
        <end position="93"/>
    </location>
</feature>
<feature type="transmembrane region" description="Helical; Name=II" evidence="1">
    <location>
        <begin position="156"/>
        <end position="179"/>
    </location>
</feature>
<feature type="transmembrane region" description="Helical; Name=III" evidence="1">
    <location>
        <begin position="195"/>
        <end position="219"/>
    </location>
</feature>
<feature type="transmembrane region" description="Helical; Name=IV" evidence="1">
    <location>
        <begin position="291"/>
        <end position="309"/>
    </location>
</feature>
<feature type="transmembrane region" description="Helical; Name=V" evidence="1">
    <location>
        <begin position="346"/>
        <end position="369"/>
    </location>
</feature>
<feature type="transmembrane region" description="Helical; Name=VI" evidence="1">
    <location>
        <begin position="385"/>
        <end position="411"/>
    </location>
</feature>
<feature type="transmembrane region" description="Helical; Name=VII" evidence="1">
    <location>
        <begin position="433"/>
        <end position="455"/>
    </location>
</feature>
<feature type="transmembrane region" description="Helical; Name=VIII" evidence="1">
    <location>
        <begin position="531"/>
        <end position="549"/>
    </location>
</feature>
<feature type="transmembrane region" description="Helical; Name=IX" evidence="1">
    <location>
        <begin position="589"/>
        <end position="610"/>
    </location>
</feature>
<feature type="transmembrane region" description="Helical; Name=X" evidence="1">
    <location>
        <begin position="664"/>
        <end position="686"/>
    </location>
</feature>
<feature type="transmembrane region" description="Helical; Name=XI" evidence="1">
    <location>
        <begin position="724"/>
        <end position="744"/>
    </location>
</feature>
<feature type="binding site" evidence="1">
    <location>
        <position position="573"/>
    </location>
    <ligand>
        <name>[4Fe-4S] cluster</name>
        <dbReference type="ChEBI" id="CHEBI:49883"/>
        <note>ligand shared between dimeric partners</note>
    </ligand>
</feature>
<feature type="binding site" evidence="1">
    <location>
        <position position="582"/>
    </location>
    <ligand>
        <name>[4Fe-4S] cluster</name>
        <dbReference type="ChEBI" id="CHEBI:49883"/>
        <note>ligand shared between dimeric partners</note>
    </ligand>
</feature>
<feature type="binding site" description="axial binding residue" evidence="1">
    <location>
        <position position="675"/>
    </location>
    <ligand>
        <name>chlorophyll a'</name>
        <dbReference type="ChEBI" id="CHEBI:189419"/>
        <label>A1</label>
    </ligand>
    <ligandPart>
        <name>Mg</name>
        <dbReference type="ChEBI" id="CHEBI:25107"/>
    </ligandPart>
</feature>
<feature type="binding site" description="axial binding residue" evidence="1">
    <location>
        <position position="683"/>
    </location>
    <ligand>
        <name>chlorophyll a</name>
        <dbReference type="ChEBI" id="CHEBI:58416"/>
        <label>A3</label>
    </ligand>
    <ligandPart>
        <name>Mg</name>
        <dbReference type="ChEBI" id="CHEBI:25107"/>
    </ligandPart>
</feature>
<feature type="binding site" evidence="1">
    <location>
        <position position="691"/>
    </location>
    <ligand>
        <name>chlorophyll a</name>
        <dbReference type="ChEBI" id="CHEBI:58416"/>
        <label>A3</label>
    </ligand>
</feature>
<feature type="binding site" evidence="1">
    <location>
        <position position="692"/>
    </location>
    <ligand>
        <name>phylloquinone</name>
        <dbReference type="ChEBI" id="CHEBI:18067"/>
        <label>A</label>
    </ligand>
</feature>
<organism>
    <name type="scientific">Nandina domestica</name>
    <name type="common">Heavenly bamboo</name>
    <dbReference type="NCBI Taxonomy" id="41776"/>
    <lineage>
        <taxon>Eukaryota</taxon>
        <taxon>Viridiplantae</taxon>
        <taxon>Streptophyta</taxon>
        <taxon>Embryophyta</taxon>
        <taxon>Tracheophyta</taxon>
        <taxon>Spermatophyta</taxon>
        <taxon>Magnoliopsida</taxon>
        <taxon>Ranunculales</taxon>
        <taxon>Berberidaceae</taxon>
        <taxon>Nandinoideae</taxon>
        <taxon>Nandineae</taxon>
        <taxon>Nandina</taxon>
    </lineage>
</organism>
<evidence type="ECO:0000255" key="1">
    <source>
        <dbReference type="HAMAP-Rule" id="MF_00458"/>
    </source>
</evidence>
<sequence length="750" mass="83187">MIIRSPEPEVKILVDRDPVKTSFEEWARPGHFSRTLAKGPETTTWIWNLHADAHDFDSHTSDLEEISRKIFSAHFGQLSIIFLWLSGMYFHGARFSNYEAWLSDPTHIRPSAQVVWPIVGQEILNGDVGGGFRGIQITSGFFQIWRASGITSELQLYCTAIGALVFAALMLFAGWFHYHKAAPKLAWFQDVESMLNHHLAGLLGLGSLSWAGHQVHVSLPINQFLDAGVDPKEIPLPHEFILNRDLLAQLYPSFAEGATPFFTLNWSKYAEFLTFRGGLDPVTGGLWLTDIAHHHLAIAILFLIAGHMYRTNWGIGHGLKDILEAHKGPFTGQGHKGLYEILTTSWHAQLALNLAMLGSLTIVVAHHMYSMPPYPYLATDYGTQLSLFTHHMWIGGFLIVGAAAHAAIFMVRDYDPTTRYNDLLDRVLRHRDAIISHLNWACIFLGFHSFGLYIHNDTMSALGRPQDMFSDTAIQLQPVFAQWIQNTHALAPSATAPGATTSTSLTWGGGGLVAVGGKVALLPIPLGTADFLVHHIHAFTIHVTVLILLKGVLFARSSRLIPDKANLGFRFPCDGPGRGGTCQVSAWDHVFLGLFWMYNAISVVIFHFSWKMQSDVWGSINDQGVVTHITGGNFAQSSITINGWLRDFLWAQASQVIQSYGSSLSAYGLFFLGAHFVWAFSLMFLFSGRGYWQELIESIVWAHNKLKVAPATQPRALSIVQGRAVGVTHYLLGGIATTWAFFLARIIAVG</sequence>
<proteinExistence type="inferred from homology"/>
<protein>
    <recommendedName>
        <fullName evidence="1">Photosystem I P700 chlorophyll a apoprotein A1</fullName>
        <ecNumber evidence="1">1.97.1.12</ecNumber>
    </recommendedName>
    <alternativeName>
        <fullName evidence="1">PSI-A</fullName>
    </alternativeName>
    <alternativeName>
        <fullName evidence="1">PsaA</fullName>
    </alternativeName>
</protein>
<comment type="function">
    <text>PsaA and PsaB bind P700, the primary electron donor of photosystem I (PSI), as well as the electron acceptors A0, A1 and FX. PSI is a plastocyanin-ferredoxin oxidoreductase, converting photonic excitation into a charge separation, which transfers an electron from the donor P700 chlorophyll pair to the spectroscopically characterized acceptors A0, A1, FX, FA and FB in turn. Oxidized P700 is reduced on the lumenal side of the thylakoid membrane by plastocyanin.</text>
</comment>
<comment type="catalytic activity">
    <reaction evidence="1">
        <text>reduced [plastocyanin] + hnu + oxidized [2Fe-2S]-[ferredoxin] = oxidized [plastocyanin] + reduced [2Fe-2S]-[ferredoxin]</text>
        <dbReference type="Rhea" id="RHEA:30407"/>
        <dbReference type="Rhea" id="RHEA-COMP:10000"/>
        <dbReference type="Rhea" id="RHEA-COMP:10001"/>
        <dbReference type="Rhea" id="RHEA-COMP:10039"/>
        <dbReference type="Rhea" id="RHEA-COMP:10040"/>
        <dbReference type="ChEBI" id="CHEBI:29036"/>
        <dbReference type="ChEBI" id="CHEBI:30212"/>
        <dbReference type="ChEBI" id="CHEBI:33737"/>
        <dbReference type="ChEBI" id="CHEBI:33738"/>
        <dbReference type="ChEBI" id="CHEBI:49552"/>
        <dbReference type="EC" id="1.97.1.12"/>
    </reaction>
</comment>
<comment type="cofactor">
    <text evidence="1">P700 is a chlorophyll a/chlorophyll a' dimer, A0 is one or more chlorophyll a, A1 is one or both phylloquinones and FX is a shared 4Fe-4S iron-sulfur center.</text>
</comment>
<comment type="subunit">
    <text evidence="1">The PsaA/B heterodimer binds the P700 chlorophyll special pair and subsequent electron acceptors. PSI consists of a core antenna complex that captures photons, and an electron transfer chain that converts photonic excitation into a charge separation. The eukaryotic PSI reaction center is composed of at least 11 subunits.</text>
</comment>
<comment type="subcellular location">
    <subcellularLocation>
        <location evidence="1">Plastid</location>
        <location evidence="1">Chloroplast thylakoid membrane</location>
        <topology evidence="1">Multi-pass membrane protein</topology>
    </subcellularLocation>
</comment>
<comment type="similarity">
    <text evidence="1">Belongs to the PsaA/PsaB family.</text>
</comment>
<keyword id="KW-0004">4Fe-4S</keyword>
<keyword id="KW-0148">Chlorophyll</keyword>
<keyword id="KW-0150">Chloroplast</keyword>
<keyword id="KW-0157">Chromophore</keyword>
<keyword id="KW-0249">Electron transport</keyword>
<keyword id="KW-0408">Iron</keyword>
<keyword id="KW-0411">Iron-sulfur</keyword>
<keyword id="KW-0460">Magnesium</keyword>
<keyword id="KW-0472">Membrane</keyword>
<keyword id="KW-0479">Metal-binding</keyword>
<keyword id="KW-0560">Oxidoreductase</keyword>
<keyword id="KW-0602">Photosynthesis</keyword>
<keyword id="KW-0603">Photosystem I</keyword>
<keyword id="KW-0934">Plastid</keyword>
<keyword id="KW-0793">Thylakoid</keyword>
<keyword id="KW-0812">Transmembrane</keyword>
<keyword id="KW-1133">Transmembrane helix</keyword>
<keyword id="KW-0813">Transport</keyword>
<accession>Q09FW1</accession>